<reference key="1">
    <citation type="journal article" date="2008" name="J. Bacteriol.">
        <title>The pangenome structure of Escherichia coli: comparative genomic analysis of E. coli commensal and pathogenic isolates.</title>
        <authorList>
            <person name="Rasko D.A."/>
            <person name="Rosovitz M.J."/>
            <person name="Myers G.S.A."/>
            <person name="Mongodin E.F."/>
            <person name="Fricke W.F."/>
            <person name="Gajer P."/>
            <person name="Crabtree J."/>
            <person name="Sebaihia M."/>
            <person name="Thomson N.R."/>
            <person name="Chaudhuri R."/>
            <person name="Henderson I.R."/>
            <person name="Sperandio V."/>
            <person name="Ravel J."/>
        </authorList>
    </citation>
    <scope>NUCLEOTIDE SEQUENCE [LARGE SCALE GENOMIC DNA]</scope>
    <source>
        <strain>E24377A / ETEC</strain>
    </source>
</reference>
<name>FADJ_ECO24</name>
<keyword id="KW-0963">Cytoplasm</keyword>
<keyword id="KW-0276">Fatty acid metabolism</keyword>
<keyword id="KW-0413">Isomerase</keyword>
<keyword id="KW-0442">Lipid degradation</keyword>
<keyword id="KW-0443">Lipid metabolism</keyword>
<keyword id="KW-0456">Lyase</keyword>
<keyword id="KW-0511">Multifunctional enzyme</keyword>
<keyword id="KW-0520">NAD</keyword>
<keyword id="KW-0560">Oxidoreductase</keyword>
<keyword id="KW-1185">Reference proteome</keyword>
<accession>A7ZPF8</accession>
<comment type="function">
    <text evidence="1">Catalyzes the formation of a hydroxyacyl-CoA by addition of water on enoyl-CoA. Also exhibits 3-hydroxyacyl-CoA epimerase and 3-hydroxyacyl-CoA dehydrogenase activities.</text>
</comment>
<comment type="catalytic activity">
    <reaction evidence="1">
        <text>a (3S)-3-hydroxyacyl-CoA = a (2E)-enoyl-CoA + H2O</text>
        <dbReference type="Rhea" id="RHEA:16105"/>
        <dbReference type="ChEBI" id="CHEBI:15377"/>
        <dbReference type="ChEBI" id="CHEBI:57318"/>
        <dbReference type="ChEBI" id="CHEBI:58856"/>
        <dbReference type="EC" id="4.2.1.17"/>
    </reaction>
</comment>
<comment type="catalytic activity">
    <reaction evidence="1">
        <text>a 4-saturated-(3S)-3-hydroxyacyl-CoA = a (3E)-enoyl-CoA + H2O</text>
        <dbReference type="Rhea" id="RHEA:20724"/>
        <dbReference type="ChEBI" id="CHEBI:15377"/>
        <dbReference type="ChEBI" id="CHEBI:58521"/>
        <dbReference type="ChEBI" id="CHEBI:137480"/>
        <dbReference type="EC" id="4.2.1.17"/>
    </reaction>
</comment>
<comment type="catalytic activity">
    <reaction evidence="1">
        <text>a (3S)-3-hydroxyacyl-CoA + NAD(+) = a 3-oxoacyl-CoA + NADH + H(+)</text>
        <dbReference type="Rhea" id="RHEA:22432"/>
        <dbReference type="ChEBI" id="CHEBI:15378"/>
        <dbReference type="ChEBI" id="CHEBI:57318"/>
        <dbReference type="ChEBI" id="CHEBI:57540"/>
        <dbReference type="ChEBI" id="CHEBI:57945"/>
        <dbReference type="ChEBI" id="CHEBI:90726"/>
        <dbReference type="EC" id="1.1.1.35"/>
    </reaction>
</comment>
<comment type="catalytic activity">
    <reaction evidence="1">
        <text>(3S)-3-hydroxybutanoyl-CoA = (3R)-3-hydroxybutanoyl-CoA</text>
        <dbReference type="Rhea" id="RHEA:21760"/>
        <dbReference type="ChEBI" id="CHEBI:57315"/>
        <dbReference type="ChEBI" id="CHEBI:57316"/>
        <dbReference type="EC" id="5.1.2.3"/>
    </reaction>
</comment>
<comment type="pathway">
    <text evidence="1">Lipid metabolism; fatty acid beta-oxidation.</text>
</comment>
<comment type="subunit">
    <text evidence="1">Heterotetramer of two alpha chains (FadJ) and two beta chains (FadI).</text>
</comment>
<comment type="subcellular location">
    <subcellularLocation>
        <location evidence="1">Cytoplasm</location>
    </subcellularLocation>
</comment>
<comment type="similarity">
    <text evidence="1">In the N-terminal section; belongs to the enoyl-CoA hydratase/isomerase family.</text>
</comment>
<comment type="similarity">
    <text evidence="1">In the central section; belongs to the 3-hydroxyacyl-CoA dehydrogenase family.</text>
</comment>
<gene>
    <name evidence="1" type="primary">fadJ</name>
    <name type="ordered locus">EcE24377A_2637</name>
</gene>
<feature type="chain" id="PRO_1000069483" description="Fatty acid oxidation complex subunit alpha">
    <location>
        <begin position="1"/>
        <end position="714"/>
    </location>
</feature>
<feature type="region of interest" description="Enoyl-CoA hydratase" evidence="1">
    <location>
        <begin position="1"/>
        <end position="190"/>
    </location>
</feature>
<feature type="region of interest" description="3-hydroxyacyl-CoA dehydrogenase" evidence="1">
    <location>
        <begin position="306"/>
        <end position="714"/>
    </location>
</feature>
<feature type="site" description="Important for catalytic activity" evidence="1">
    <location>
        <position position="118"/>
    </location>
</feature>
<feature type="site" description="Important for catalytic activity" evidence="1">
    <location>
        <position position="140"/>
    </location>
</feature>
<organism>
    <name type="scientific">Escherichia coli O139:H28 (strain E24377A / ETEC)</name>
    <dbReference type="NCBI Taxonomy" id="331111"/>
    <lineage>
        <taxon>Bacteria</taxon>
        <taxon>Pseudomonadati</taxon>
        <taxon>Pseudomonadota</taxon>
        <taxon>Gammaproteobacteria</taxon>
        <taxon>Enterobacterales</taxon>
        <taxon>Enterobacteriaceae</taxon>
        <taxon>Escherichia</taxon>
    </lineage>
</organism>
<evidence type="ECO:0000255" key="1">
    <source>
        <dbReference type="HAMAP-Rule" id="MF_01617"/>
    </source>
</evidence>
<sequence>MEMASVFTLNVRLDNIAIITIDVPGEKMNTLKAEFASQVRAIIKQLRENKELRGVVFVSAKPDNFIAGADINMIGNCKTAQEAEALARQGQQLMAEIHALPIPVIAAIHGACLGGGLELALACHGRVCTDDPKTVLGLPEVQLGLLPGSGGTQRLPRLIGVSTALEMILTGKQLRAKQALKLGLVDDVVPHSILLEVAVELAKKDRPSSRPLPVRERILAGPLGRALLFKMVGKKTEHKTQGNYPATERILEVVETGLAQGTSSGYDAEARAFGELAMTPQSQALRSIFFASTEVKKDPGSDAPPAPLNSVGILGGGLMGGGIAYVTACKAGLPVRIKDINPQGINHALKYSWDQLEGKVRRRHLKASERDKQLALISGTTDYRGFAHRDLIIEAVFENLELKQQMVAEVEQNCAAHTIFASNTSSLPIGDIAAHATRPEQVIGLHFFSPVEKMPLVEIIPHAGTSAQTIATTVKLAKKQGKTPIVVRDKAGFYVNRILAPYINEAIRMLTEGERVEHIDAALVKFGFPVGPIQLLDEVGIDTGTKIIPVLEAAYGERFSAPANVVSSILNDDRKGRKNGRGFYLYGQKGRKSKKQVDPAIYPLIGAQGQGRLSAPQVAERCVMLMLNEAVRCVDEQVIRSVRDGDIGAVFGIGFPPFLGGPFRYIDSLGAGEVVAIMQRLATQYGSRFTPCERLVEMGARGESFWKTTATDLQ</sequence>
<protein>
    <recommendedName>
        <fullName evidence="1">Fatty acid oxidation complex subunit alpha</fullName>
    </recommendedName>
    <domain>
        <recommendedName>
            <fullName evidence="1">Enoyl-CoA hydratase/3-hydroxybutyryl-CoA epimerase</fullName>
            <ecNumber evidence="1">4.2.1.17</ecNumber>
            <ecNumber evidence="1">5.1.2.3</ecNumber>
        </recommendedName>
    </domain>
    <domain>
        <recommendedName>
            <fullName evidence="1">3-hydroxyacyl-CoA dehydrogenase</fullName>
            <ecNumber evidence="1">1.1.1.35</ecNumber>
        </recommendedName>
    </domain>
</protein>
<proteinExistence type="inferred from homology"/>
<dbReference type="EC" id="4.2.1.17" evidence="1"/>
<dbReference type="EC" id="5.1.2.3" evidence="1"/>
<dbReference type="EC" id="1.1.1.35" evidence="1"/>
<dbReference type="EMBL" id="CP000800">
    <property type="protein sequence ID" value="ABV17540.1"/>
    <property type="molecule type" value="Genomic_DNA"/>
</dbReference>
<dbReference type="RefSeq" id="WP_000425061.1">
    <property type="nucleotide sequence ID" value="NC_009801.1"/>
</dbReference>
<dbReference type="SMR" id="A7ZPF8"/>
<dbReference type="KEGG" id="ecw:EcE24377A_2637"/>
<dbReference type="HOGENOM" id="CLU_009834_16_1_6"/>
<dbReference type="UniPathway" id="UPA00659"/>
<dbReference type="Proteomes" id="UP000001122">
    <property type="component" value="Chromosome"/>
</dbReference>
<dbReference type="GO" id="GO:0005737">
    <property type="term" value="C:cytoplasm"/>
    <property type="evidence" value="ECO:0007669"/>
    <property type="project" value="UniProtKB-SubCell"/>
</dbReference>
<dbReference type="GO" id="GO:0008692">
    <property type="term" value="F:3-hydroxybutyryl-CoA epimerase activity"/>
    <property type="evidence" value="ECO:0007669"/>
    <property type="project" value="UniProtKB-UniRule"/>
</dbReference>
<dbReference type="GO" id="GO:0004300">
    <property type="term" value="F:enoyl-CoA hydratase activity"/>
    <property type="evidence" value="ECO:0007669"/>
    <property type="project" value="UniProtKB-UniRule"/>
</dbReference>
<dbReference type="GO" id="GO:0016509">
    <property type="term" value="F:long-chain-3-hydroxyacyl-CoA dehydrogenase activity"/>
    <property type="evidence" value="ECO:0007669"/>
    <property type="project" value="TreeGrafter"/>
</dbReference>
<dbReference type="GO" id="GO:0070403">
    <property type="term" value="F:NAD+ binding"/>
    <property type="evidence" value="ECO:0007669"/>
    <property type="project" value="InterPro"/>
</dbReference>
<dbReference type="GO" id="GO:0006635">
    <property type="term" value="P:fatty acid beta-oxidation"/>
    <property type="evidence" value="ECO:0007669"/>
    <property type="project" value="UniProtKB-UniRule"/>
</dbReference>
<dbReference type="CDD" id="cd06558">
    <property type="entry name" value="crotonase-like"/>
    <property type="match status" value="1"/>
</dbReference>
<dbReference type="FunFam" id="1.10.1040.50:FF:000003">
    <property type="entry name" value="Fatty acid oxidation complex subunit alpha"/>
    <property type="match status" value="1"/>
</dbReference>
<dbReference type="FunFam" id="3.90.226.10:FF:000011">
    <property type="entry name" value="Fatty acid oxidation complex subunit alpha"/>
    <property type="match status" value="1"/>
</dbReference>
<dbReference type="FunFam" id="3.40.50.720:FF:000009">
    <property type="entry name" value="Fatty oxidation complex, alpha subunit"/>
    <property type="match status" value="1"/>
</dbReference>
<dbReference type="Gene3D" id="1.10.1040.50">
    <property type="match status" value="1"/>
</dbReference>
<dbReference type="Gene3D" id="3.90.226.10">
    <property type="entry name" value="2-enoyl-CoA Hydratase, Chain A, domain 1"/>
    <property type="match status" value="1"/>
</dbReference>
<dbReference type="Gene3D" id="3.40.50.720">
    <property type="entry name" value="NAD(P)-binding Rossmann-like Domain"/>
    <property type="match status" value="1"/>
</dbReference>
<dbReference type="HAMAP" id="MF_01617">
    <property type="entry name" value="FadJ"/>
    <property type="match status" value="1"/>
</dbReference>
<dbReference type="InterPro" id="IPR006180">
    <property type="entry name" value="3-OHacyl-CoA_DH_CS"/>
</dbReference>
<dbReference type="InterPro" id="IPR006176">
    <property type="entry name" value="3-OHacyl-CoA_DH_NAD-bd"/>
</dbReference>
<dbReference type="InterPro" id="IPR006108">
    <property type="entry name" value="3HC_DH_C"/>
</dbReference>
<dbReference type="InterPro" id="IPR008927">
    <property type="entry name" value="6-PGluconate_DH-like_C_sf"/>
</dbReference>
<dbReference type="InterPro" id="IPR029045">
    <property type="entry name" value="ClpP/crotonase-like_dom_sf"/>
</dbReference>
<dbReference type="InterPro" id="IPR001753">
    <property type="entry name" value="Enoyl-CoA_hydra/iso"/>
</dbReference>
<dbReference type="InterPro" id="IPR050136">
    <property type="entry name" value="FA_oxidation_alpha_subunit"/>
</dbReference>
<dbReference type="InterPro" id="IPR012802">
    <property type="entry name" value="FadJ"/>
</dbReference>
<dbReference type="InterPro" id="IPR036291">
    <property type="entry name" value="NAD(P)-bd_dom_sf"/>
</dbReference>
<dbReference type="NCBIfam" id="TIGR02440">
    <property type="entry name" value="FadJ"/>
    <property type="match status" value="1"/>
</dbReference>
<dbReference type="NCBIfam" id="NF008363">
    <property type="entry name" value="PRK11154.1"/>
    <property type="match status" value="1"/>
</dbReference>
<dbReference type="PANTHER" id="PTHR43612">
    <property type="entry name" value="TRIFUNCTIONAL ENZYME SUBUNIT ALPHA"/>
    <property type="match status" value="1"/>
</dbReference>
<dbReference type="PANTHER" id="PTHR43612:SF3">
    <property type="entry name" value="TRIFUNCTIONAL ENZYME SUBUNIT ALPHA, MITOCHONDRIAL"/>
    <property type="match status" value="1"/>
</dbReference>
<dbReference type="Pfam" id="PF00725">
    <property type="entry name" value="3HCDH"/>
    <property type="match status" value="2"/>
</dbReference>
<dbReference type="Pfam" id="PF02737">
    <property type="entry name" value="3HCDH_N"/>
    <property type="match status" value="1"/>
</dbReference>
<dbReference type="Pfam" id="PF00378">
    <property type="entry name" value="ECH_1"/>
    <property type="match status" value="1"/>
</dbReference>
<dbReference type="SUPFAM" id="SSF48179">
    <property type="entry name" value="6-phosphogluconate dehydrogenase C-terminal domain-like"/>
    <property type="match status" value="2"/>
</dbReference>
<dbReference type="SUPFAM" id="SSF52096">
    <property type="entry name" value="ClpP/crotonase"/>
    <property type="match status" value="1"/>
</dbReference>
<dbReference type="SUPFAM" id="SSF51735">
    <property type="entry name" value="NAD(P)-binding Rossmann-fold domains"/>
    <property type="match status" value="1"/>
</dbReference>
<dbReference type="PROSITE" id="PS00067">
    <property type="entry name" value="3HCDH"/>
    <property type="match status" value="1"/>
</dbReference>